<dbReference type="EC" id="2.1.1.228" evidence="1"/>
<dbReference type="EMBL" id="CP000672">
    <property type="protein sequence ID" value="ABQ99709.1"/>
    <property type="molecule type" value="Genomic_DNA"/>
</dbReference>
<dbReference type="PDB" id="8APT">
    <property type="method" value="X-ray"/>
    <property type="resolution" value="1.80 A"/>
    <property type="chains" value="A=1-246"/>
</dbReference>
<dbReference type="PDB" id="8APU">
    <property type="method" value="X-ray"/>
    <property type="resolution" value="1.90 A"/>
    <property type="chains" value="A=1-246"/>
</dbReference>
<dbReference type="PDB" id="8APV">
    <property type="method" value="X-ray"/>
    <property type="resolution" value="2.40 A"/>
    <property type="chains" value="A=1-246"/>
</dbReference>
<dbReference type="PDB" id="8APW">
    <property type="method" value="X-ray"/>
    <property type="resolution" value="1.80 A"/>
    <property type="chains" value="A=1-246"/>
</dbReference>
<dbReference type="PDBsum" id="8APT"/>
<dbReference type="PDBsum" id="8APU"/>
<dbReference type="PDBsum" id="8APV"/>
<dbReference type="PDBsum" id="8APW"/>
<dbReference type="SMR" id="A5UG04"/>
<dbReference type="KEGG" id="hiq:CGSHiGG_03625"/>
<dbReference type="HOGENOM" id="CLU_047363_0_1_6"/>
<dbReference type="Proteomes" id="UP000001990">
    <property type="component" value="Chromosome"/>
</dbReference>
<dbReference type="GO" id="GO:0005829">
    <property type="term" value="C:cytosol"/>
    <property type="evidence" value="ECO:0007669"/>
    <property type="project" value="TreeGrafter"/>
</dbReference>
<dbReference type="GO" id="GO:0052906">
    <property type="term" value="F:tRNA (guanine(37)-N1)-methyltransferase activity"/>
    <property type="evidence" value="ECO:0007669"/>
    <property type="project" value="UniProtKB-UniRule"/>
</dbReference>
<dbReference type="GO" id="GO:0002939">
    <property type="term" value="P:tRNA N1-guanine methylation"/>
    <property type="evidence" value="ECO:0007669"/>
    <property type="project" value="TreeGrafter"/>
</dbReference>
<dbReference type="CDD" id="cd18080">
    <property type="entry name" value="TrmD-like"/>
    <property type="match status" value="1"/>
</dbReference>
<dbReference type="FunFam" id="1.10.1270.20:FF:000001">
    <property type="entry name" value="tRNA (guanine-N(1)-)-methyltransferase"/>
    <property type="match status" value="1"/>
</dbReference>
<dbReference type="FunFam" id="3.40.1280.10:FF:000001">
    <property type="entry name" value="tRNA (guanine-N(1)-)-methyltransferase"/>
    <property type="match status" value="1"/>
</dbReference>
<dbReference type="Gene3D" id="3.40.1280.10">
    <property type="match status" value="1"/>
</dbReference>
<dbReference type="Gene3D" id="1.10.1270.20">
    <property type="entry name" value="tRNA(m1g37)methyltransferase, domain 2"/>
    <property type="match status" value="1"/>
</dbReference>
<dbReference type="HAMAP" id="MF_00605">
    <property type="entry name" value="TrmD"/>
    <property type="match status" value="1"/>
</dbReference>
<dbReference type="InterPro" id="IPR029028">
    <property type="entry name" value="Alpha/beta_knot_MTases"/>
</dbReference>
<dbReference type="InterPro" id="IPR023148">
    <property type="entry name" value="tRNA_m1G_MeTrfase_C_sf"/>
</dbReference>
<dbReference type="InterPro" id="IPR002649">
    <property type="entry name" value="tRNA_m1G_MeTrfase_TrmD"/>
</dbReference>
<dbReference type="InterPro" id="IPR029026">
    <property type="entry name" value="tRNA_m1G_MTases_N"/>
</dbReference>
<dbReference type="InterPro" id="IPR016009">
    <property type="entry name" value="tRNA_MeTrfase_TRMD/TRM10"/>
</dbReference>
<dbReference type="NCBIfam" id="NF000648">
    <property type="entry name" value="PRK00026.1"/>
    <property type="match status" value="1"/>
</dbReference>
<dbReference type="NCBIfam" id="TIGR00088">
    <property type="entry name" value="trmD"/>
    <property type="match status" value="1"/>
</dbReference>
<dbReference type="PANTHER" id="PTHR46417">
    <property type="entry name" value="TRNA (GUANINE-N(1)-)-METHYLTRANSFERASE"/>
    <property type="match status" value="1"/>
</dbReference>
<dbReference type="PANTHER" id="PTHR46417:SF1">
    <property type="entry name" value="TRNA (GUANINE-N(1)-)-METHYLTRANSFERASE"/>
    <property type="match status" value="1"/>
</dbReference>
<dbReference type="Pfam" id="PF01746">
    <property type="entry name" value="tRNA_m1G_MT"/>
    <property type="match status" value="1"/>
</dbReference>
<dbReference type="PIRSF" id="PIRSF000386">
    <property type="entry name" value="tRNA_mtase"/>
    <property type="match status" value="1"/>
</dbReference>
<dbReference type="SUPFAM" id="SSF75217">
    <property type="entry name" value="alpha/beta knot"/>
    <property type="match status" value="1"/>
</dbReference>
<organism>
    <name type="scientific">Haemophilus influenzae (strain PittGG)</name>
    <dbReference type="NCBI Taxonomy" id="374931"/>
    <lineage>
        <taxon>Bacteria</taxon>
        <taxon>Pseudomonadati</taxon>
        <taxon>Pseudomonadota</taxon>
        <taxon>Gammaproteobacteria</taxon>
        <taxon>Pasteurellales</taxon>
        <taxon>Pasteurellaceae</taxon>
        <taxon>Haemophilus</taxon>
    </lineage>
</organism>
<sequence>MWIGVISLFPEMFKAITEFGVTGRAVKHNLLKVECWNPRDFTFDKHKTVDDRPYGGGPGMLMMVQPLRDAIHTAKAAAGEGAKVIYLSPQGRKLDQGGVTELAQNQKLILVCGRYEGIDERLIQTEIDEEWSIGDYVLTGGELPAMTLIDAVARFIPGVLGKQASAEEDSFADGLLDCPHYTRPEVLEGLTVPPVLMSGHHEEIRKWRLKQSLQRTWLRRPELLEGLALTDEQRKLLKEAQAEHNS</sequence>
<name>TRMD_HAEIG</name>
<gene>
    <name evidence="1" type="primary">trmD</name>
    <name type="ordered locus">CGSHiGG_03625</name>
</gene>
<reference key="1">
    <citation type="journal article" date="2007" name="Genome Biol.">
        <title>Characterization and modeling of the Haemophilus influenzae core and supragenomes based on the complete genomic sequences of Rd and 12 clinical nontypeable strains.</title>
        <authorList>
            <person name="Hogg J.S."/>
            <person name="Hu F.Z."/>
            <person name="Janto B."/>
            <person name="Boissy R."/>
            <person name="Hayes J."/>
            <person name="Keefe R."/>
            <person name="Post J.C."/>
            <person name="Ehrlich G.D."/>
        </authorList>
    </citation>
    <scope>NUCLEOTIDE SEQUENCE [LARGE SCALE GENOMIC DNA]</scope>
    <source>
        <strain>PittGG</strain>
    </source>
</reference>
<accession>A5UG04</accession>
<evidence type="ECO:0000255" key="1">
    <source>
        <dbReference type="HAMAP-Rule" id="MF_00605"/>
    </source>
</evidence>
<evidence type="ECO:0007829" key="2">
    <source>
        <dbReference type="PDB" id="8APT"/>
    </source>
</evidence>
<proteinExistence type="evidence at protein level"/>
<protein>
    <recommendedName>
        <fullName evidence="1">tRNA (guanine-N(1)-)-methyltransferase</fullName>
        <ecNumber evidence="1">2.1.1.228</ecNumber>
    </recommendedName>
    <alternativeName>
        <fullName evidence="1">M1G-methyltransferase</fullName>
    </alternativeName>
    <alternativeName>
        <fullName evidence="1">tRNA [GM37] methyltransferase</fullName>
    </alternativeName>
</protein>
<keyword id="KW-0002">3D-structure</keyword>
<keyword id="KW-0963">Cytoplasm</keyword>
<keyword id="KW-0489">Methyltransferase</keyword>
<keyword id="KW-0949">S-adenosyl-L-methionine</keyword>
<keyword id="KW-0808">Transferase</keyword>
<keyword id="KW-0819">tRNA processing</keyword>
<comment type="function">
    <text evidence="1">Specifically methylates guanosine-37 in various tRNAs.</text>
</comment>
<comment type="catalytic activity">
    <reaction evidence="1">
        <text>guanosine(37) in tRNA + S-adenosyl-L-methionine = N(1)-methylguanosine(37) in tRNA + S-adenosyl-L-homocysteine + H(+)</text>
        <dbReference type="Rhea" id="RHEA:36899"/>
        <dbReference type="Rhea" id="RHEA-COMP:10145"/>
        <dbReference type="Rhea" id="RHEA-COMP:10147"/>
        <dbReference type="ChEBI" id="CHEBI:15378"/>
        <dbReference type="ChEBI" id="CHEBI:57856"/>
        <dbReference type="ChEBI" id="CHEBI:59789"/>
        <dbReference type="ChEBI" id="CHEBI:73542"/>
        <dbReference type="ChEBI" id="CHEBI:74269"/>
        <dbReference type="EC" id="2.1.1.228"/>
    </reaction>
</comment>
<comment type="subunit">
    <text evidence="1">Homodimer.</text>
</comment>
<comment type="subcellular location">
    <subcellularLocation>
        <location evidence="1">Cytoplasm</location>
    </subcellularLocation>
</comment>
<comment type="similarity">
    <text evidence="1">Belongs to the RNA methyltransferase TrmD family.</text>
</comment>
<feature type="chain" id="PRO_1000006482" description="tRNA (guanine-N(1)-)-methyltransferase">
    <location>
        <begin position="1"/>
        <end position="246"/>
    </location>
</feature>
<feature type="binding site" evidence="1">
    <location>
        <position position="113"/>
    </location>
    <ligand>
        <name>S-adenosyl-L-methionine</name>
        <dbReference type="ChEBI" id="CHEBI:59789"/>
    </ligand>
</feature>
<feature type="binding site" evidence="1">
    <location>
        <begin position="133"/>
        <end position="138"/>
    </location>
    <ligand>
        <name>S-adenosyl-L-methionine</name>
        <dbReference type="ChEBI" id="CHEBI:59789"/>
    </ligand>
</feature>
<feature type="strand" evidence="2">
    <location>
        <begin position="1"/>
        <end position="6"/>
    </location>
</feature>
<feature type="helix" evidence="2">
    <location>
        <begin position="10"/>
        <end position="13"/>
    </location>
</feature>
<feature type="helix" evidence="2">
    <location>
        <begin position="14"/>
        <end position="17"/>
    </location>
</feature>
<feature type="helix" evidence="2">
    <location>
        <begin position="20"/>
        <end position="27"/>
    </location>
</feature>
<feature type="strand" evidence="2">
    <location>
        <begin position="30"/>
        <end position="36"/>
    </location>
</feature>
<feature type="helix" evidence="2">
    <location>
        <begin position="38"/>
        <end position="41"/>
    </location>
</feature>
<feature type="helix" evidence="2">
    <location>
        <begin position="64"/>
        <end position="78"/>
    </location>
</feature>
<feature type="strand" evidence="2">
    <location>
        <begin position="83"/>
        <end position="87"/>
    </location>
</feature>
<feature type="strand" evidence="2">
    <location>
        <begin position="91"/>
        <end position="93"/>
    </location>
</feature>
<feature type="helix" evidence="2">
    <location>
        <begin position="96"/>
        <end position="102"/>
    </location>
</feature>
<feature type="strand" evidence="2">
    <location>
        <begin position="106"/>
        <end position="111"/>
    </location>
</feature>
<feature type="helix" evidence="2">
    <location>
        <begin position="120"/>
        <end position="126"/>
    </location>
</feature>
<feature type="strand" evidence="2">
    <location>
        <begin position="128"/>
        <end position="136"/>
    </location>
</feature>
<feature type="helix" evidence="2">
    <location>
        <begin position="142"/>
        <end position="153"/>
    </location>
</feature>
<feature type="helix" evidence="2">
    <location>
        <begin position="172"/>
        <end position="174"/>
    </location>
</feature>
<feature type="strand" evidence="2">
    <location>
        <begin position="185"/>
        <end position="187"/>
    </location>
</feature>
<feature type="helix" evidence="2">
    <location>
        <begin position="194"/>
        <end position="197"/>
    </location>
</feature>
<feature type="helix" evidence="2">
    <location>
        <begin position="201"/>
        <end position="219"/>
    </location>
</feature>
<feature type="helix" evidence="2">
    <location>
        <begin position="221"/>
        <end position="225"/>
    </location>
</feature>
<feature type="helix" evidence="2">
    <location>
        <begin position="231"/>
        <end position="244"/>
    </location>
</feature>